<gene>
    <name evidence="1" type="primary">tpiA</name>
    <name type="ordered locus">XF_0303</name>
</gene>
<reference key="1">
    <citation type="journal article" date="2000" name="Nature">
        <title>The genome sequence of the plant pathogen Xylella fastidiosa.</title>
        <authorList>
            <person name="Simpson A.J.G."/>
            <person name="Reinach F.C."/>
            <person name="Arruda P."/>
            <person name="Abreu F.A."/>
            <person name="Acencio M."/>
            <person name="Alvarenga R."/>
            <person name="Alves L.M.C."/>
            <person name="Araya J.E."/>
            <person name="Baia G.S."/>
            <person name="Baptista C.S."/>
            <person name="Barros M.H."/>
            <person name="Bonaccorsi E.D."/>
            <person name="Bordin S."/>
            <person name="Bove J.M."/>
            <person name="Briones M.R.S."/>
            <person name="Bueno M.R.P."/>
            <person name="Camargo A.A."/>
            <person name="Camargo L.E.A."/>
            <person name="Carraro D.M."/>
            <person name="Carrer H."/>
            <person name="Colauto N.B."/>
            <person name="Colombo C."/>
            <person name="Costa F.F."/>
            <person name="Costa M.C.R."/>
            <person name="Costa-Neto C.M."/>
            <person name="Coutinho L.L."/>
            <person name="Cristofani M."/>
            <person name="Dias-Neto E."/>
            <person name="Docena C."/>
            <person name="El-Dorry H."/>
            <person name="Facincani A.P."/>
            <person name="Ferreira A.J.S."/>
            <person name="Ferreira V.C.A."/>
            <person name="Ferro J.A."/>
            <person name="Fraga J.S."/>
            <person name="Franca S.C."/>
            <person name="Franco M.C."/>
            <person name="Frohme M."/>
            <person name="Furlan L.R."/>
            <person name="Garnier M."/>
            <person name="Goldman G.H."/>
            <person name="Goldman M.H.S."/>
            <person name="Gomes S.L."/>
            <person name="Gruber A."/>
            <person name="Ho P.L."/>
            <person name="Hoheisel J.D."/>
            <person name="Junqueira M.L."/>
            <person name="Kemper E.L."/>
            <person name="Kitajima J.P."/>
            <person name="Krieger J.E."/>
            <person name="Kuramae E.E."/>
            <person name="Laigret F."/>
            <person name="Lambais M.R."/>
            <person name="Leite L.C.C."/>
            <person name="Lemos E.G.M."/>
            <person name="Lemos M.V.F."/>
            <person name="Lopes S.A."/>
            <person name="Lopes C.R."/>
            <person name="Machado J.A."/>
            <person name="Machado M.A."/>
            <person name="Madeira A.M.B.N."/>
            <person name="Madeira H.M.F."/>
            <person name="Marino C.L."/>
            <person name="Marques M.V."/>
            <person name="Martins E.A.L."/>
            <person name="Martins E.M.F."/>
            <person name="Matsukuma A.Y."/>
            <person name="Menck C.F.M."/>
            <person name="Miracca E.C."/>
            <person name="Miyaki C.Y."/>
            <person name="Monteiro-Vitorello C.B."/>
            <person name="Moon D.H."/>
            <person name="Nagai M.A."/>
            <person name="Nascimento A.L.T.O."/>
            <person name="Netto L.E.S."/>
            <person name="Nhani A. Jr."/>
            <person name="Nobrega F.G."/>
            <person name="Nunes L.R."/>
            <person name="Oliveira M.A."/>
            <person name="de Oliveira M.C."/>
            <person name="de Oliveira R.C."/>
            <person name="Palmieri D.A."/>
            <person name="Paris A."/>
            <person name="Peixoto B.R."/>
            <person name="Pereira G.A.G."/>
            <person name="Pereira H.A. Jr."/>
            <person name="Pesquero J.B."/>
            <person name="Quaggio R.B."/>
            <person name="Roberto P.G."/>
            <person name="Rodrigues V."/>
            <person name="de Rosa A.J.M."/>
            <person name="de Rosa V.E. Jr."/>
            <person name="de Sa R.G."/>
            <person name="Santelli R.V."/>
            <person name="Sawasaki H.E."/>
            <person name="da Silva A.C.R."/>
            <person name="da Silva A.M."/>
            <person name="da Silva F.R."/>
            <person name="Silva W.A. Jr."/>
            <person name="da Silveira J.F."/>
            <person name="Silvestri M.L.Z."/>
            <person name="Siqueira W.J."/>
            <person name="de Souza A.A."/>
            <person name="de Souza A.P."/>
            <person name="Terenzi M.F."/>
            <person name="Truffi D."/>
            <person name="Tsai S.M."/>
            <person name="Tsuhako M.H."/>
            <person name="Vallada H."/>
            <person name="Van Sluys M.A."/>
            <person name="Verjovski-Almeida S."/>
            <person name="Vettore A.L."/>
            <person name="Zago M.A."/>
            <person name="Zatz M."/>
            <person name="Meidanis J."/>
            <person name="Setubal J.C."/>
        </authorList>
    </citation>
    <scope>NUCLEOTIDE SEQUENCE [LARGE SCALE GENOMIC DNA]</scope>
    <source>
        <strain>9a5c</strain>
    </source>
</reference>
<dbReference type="EC" id="5.3.1.1" evidence="1"/>
<dbReference type="EMBL" id="AE003849">
    <property type="protein sequence ID" value="AAF83114.1"/>
    <property type="molecule type" value="Genomic_DNA"/>
</dbReference>
<dbReference type="PIR" id="A82824">
    <property type="entry name" value="A82824"/>
</dbReference>
<dbReference type="RefSeq" id="WP_010892839.1">
    <property type="nucleotide sequence ID" value="NC_002488.3"/>
</dbReference>
<dbReference type="SMR" id="Q9PGJ7"/>
<dbReference type="STRING" id="160492.XF_0303"/>
<dbReference type="KEGG" id="xfa:XF_0303"/>
<dbReference type="PATRIC" id="fig|160492.11.peg.331"/>
<dbReference type="eggNOG" id="COG0149">
    <property type="taxonomic scope" value="Bacteria"/>
</dbReference>
<dbReference type="HOGENOM" id="CLU_024251_2_3_6"/>
<dbReference type="UniPathway" id="UPA00109">
    <property type="reaction ID" value="UER00189"/>
</dbReference>
<dbReference type="UniPathway" id="UPA00138"/>
<dbReference type="Proteomes" id="UP000000812">
    <property type="component" value="Chromosome"/>
</dbReference>
<dbReference type="GO" id="GO:0005829">
    <property type="term" value="C:cytosol"/>
    <property type="evidence" value="ECO:0007669"/>
    <property type="project" value="TreeGrafter"/>
</dbReference>
<dbReference type="GO" id="GO:0004807">
    <property type="term" value="F:triose-phosphate isomerase activity"/>
    <property type="evidence" value="ECO:0007669"/>
    <property type="project" value="UniProtKB-UniRule"/>
</dbReference>
<dbReference type="GO" id="GO:0006094">
    <property type="term" value="P:gluconeogenesis"/>
    <property type="evidence" value="ECO:0007669"/>
    <property type="project" value="UniProtKB-UniRule"/>
</dbReference>
<dbReference type="GO" id="GO:0046166">
    <property type="term" value="P:glyceraldehyde-3-phosphate biosynthetic process"/>
    <property type="evidence" value="ECO:0007669"/>
    <property type="project" value="TreeGrafter"/>
</dbReference>
<dbReference type="GO" id="GO:0019563">
    <property type="term" value="P:glycerol catabolic process"/>
    <property type="evidence" value="ECO:0007669"/>
    <property type="project" value="TreeGrafter"/>
</dbReference>
<dbReference type="GO" id="GO:0006096">
    <property type="term" value="P:glycolytic process"/>
    <property type="evidence" value="ECO:0007669"/>
    <property type="project" value="UniProtKB-UniRule"/>
</dbReference>
<dbReference type="CDD" id="cd00311">
    <property type="entry name" value="TIM"/>
    <property type="match status" value="1"/>
</dbReference>
<dbReference type="FunFam" id="3.20.20.70:FF:000016">
    <property type="entry name" value="Triosephosphate isomerase"/>
    <property type="match status" value="1"/>
</dbReference>
<dbReference type="Gene3D" id="3.20.20.70">
    <property type="entry name" value="Aldolase class I"/>
    <property type="match status" value="1"/>
</dbReference>
<dbReference type="HAMAP" id="MF_00147_B">
    <property type="entry name" value="TIM_B"/>
    <property type="match status" value="1"/>
</dbReference>
<dbReference type="InterPro" id="IPR013785">
    <property type="entry name" value="Aldolase_TIM"/>
</dbReference>
<dbReference type="InterPro" id="IPR035990">
    <property type="entry name" value="TIM_sf"/>
</dbReference>
<dbReference type="InterPro" id="IPR022896">
    <property type="entry name" value="TrioseP_Isoase_bac/euk"/>
</dbReference>
<dbReference type="InterPro" id="IPR000652">
    <property type="entry name" value="Triosephosphate_isomerase"/>
</dbReference>
<dbReference type="InterPro" id="IPR020861">
    <property type="entry name" value="Triosephosphate_isomerase_AS"/>
</dbReference>
<dbReference type="NCBIfam" id="TIGR00419">
    <property type="entry name" value="tim"/>
    <property type="match status" value="1"/>
</dbReference>
<dbReference type="PANTHER" id="PTHR21139">
    <property type="entry name" value="TRIOSEPHOSPHATE ISOMERASE"/>
    <property type="match status" value="1"/>
</dbReference>
<dbReference type="PANTHER" id="PTHR21139:SF42">
    <property type="entry name" value="TRIOSEPHOSPHATE ISOMERASE"/>
    <property type="match status" value="1"/>
</dbReference>
<dbReference type="Pfam" id="PF00121">
    <property type="entry name" value="TIM"/>
    <property type="match status" value="1"/>
</dbReference>
<dbReference type="SUPFAM" id="SSF51351">
    <property type="entry name" value="Triosephosphate isomerase (TIM)"/>
    <property type="match status" value="1"/>
</dbReference>
<dbReference type="PROSITE" id="PS00171">
    <property type="entry name" value="TIM_1"/>
    <property type="match status" value="1"/>
</dbReference>
<dbReference type="PROSITE" id="PS51440">
    <property type="entry name" value="TIM_2"/>
    <property type="match status" value="1"/>
</dbReference>
<name>TPIS_XYLFA</name>
<accession>Q9PGJ7</accession>
<proteinExistence type="inferred from homology"/>
<feature type="chain" id="PRO_0000090324" description="Triosephosphate isomerase">
    <location>
        <begin position="1"/>
        <end position="249"/>
    </location>
</feature>
<feature type="active site" description="Electrophile" evidence="1">
    <location>
        <position position="94"/>
    </location>
</feature>
<feature type="active site" description="Proton acceptor" evidence="1">
    <location>
        <position position="166"/>
    </location>
</feature>
<feature type="binding site" evidence="1">
    <location>
        <begin position="9"/>
        <end position="11"/>
    </location>
    <ligand>
        <name>substrate</name>
    </ligand>
</feature>
<feature type="binding site" evidence="1">
    <location>
        <position position="172"/>
    </location>
    <ligand>
        <name>substrate</name>
    </ligand>
</feature>
<feature type="binding site" evidence="1">
    <location>
        <begin position="232"/>
        <end position="233"/>
    </location>
    <ligand>
        <name>substrate</name>
    </ligand>
</feature>
<keyword id="KW-0963">Cytoplasm</keyword>
<keyword id="KW-0312">Gluconeogenesis</keyword>
<keyword id="KW-0324">Glycolysis</keyword>
<keyword id="KW-0413">Isomerase</keyword>
<protein>
    <recommendedName>
        <fullName evidence="1">Triosephosphate isomerase</fullName>
        <shortName evidence="1">TIM</shortName>
        <shortName evidence="1">TPI</shortName>
        <ecNumber evidence="1">5.3.1.1</ecNumber>
    </recommendedName>
    <alternativeName>
        <fullName evidence="1">Triose-phosphate isomerase</fullName>
    </alternativeName>
</protein>
<comment type="function">
    <text evidence="1">Involved in the gluconeogenesis. Catalyzes stereospecifically the conversion of dihydroxyacetone phosphate (DHAP) to D-glyceraldehyde-3-phosphate (G3P).</text>
</comment>
<comment type="catalytic activity">
    <reaction evidence="1">
        <text>D-glyceraldehyde 3-phosphate = dihydroxyacetone phosphate</text>
        <dbReference type="Rhea" id="RHEA:18585"/>
        <dbReference type="ChEBI" id="CHEBI:57642"/>
        <dbReference type="ChEBI" id="CHEBI:59776"/>
        <dbReference type="EC" id="5.3.1.1"/>
    </reaction>
</comment>
<comment type="pathway">
    <text evidence="1">Carbohydrate biosynthesis; gluconeogenesis.</text>
</comment>
<comment type="pathway">
    <text evidence="1">Carbohydrate degradation; glycolysis; D-glyceraldehyde 3-phosphate from glycerone phosphate: step 1/1.</text>
</comment>
<comment type="subunit">
    <text evidence="1">Homodimer.</text>
</comment>
<comment type="subcellular location">
    <subcellularLocation>
        <location evidence="1">Cytoplasm</location>
    </subcellularLocation>
</comment>
<comment type="similarity">
    <text evidence="1">Belongs to the triosephosphate isomerase family.</text>
</comment>
<evidence type="ECO:0000255" key="1">
    <source>
        <dbReference type="HAMAP-Rule" id="MF_00147"/>
    </source>
</evidence>
<sequence length="249" mass="26076">MRPKIVAGNWKLHGSHAFAQALVAQVAAGLPLLGVSVIILPPLLYLSDLAQRFKGEGLAFGAQNVSHHDKGAYTGEVSAAMVADVGAHYTLVGHSERREYHHEDSELVARKFAAALSAGLRPILCVGESLPQREAGQAEVAIAMQLAPVLALVGPQGVARGLIAYEPVWAIGTGRHADPSQVQAMHAFIRGEIARQDARIGDSLLILYGGGIKPCNAAELFSQQDVDGGLIGGASLVADDFLAIARATV</sequence>
<organism>
    <name type="scientific">Xylella fastidiosa (strain 9a5c)</name>
    <dbReference type="NCBI Taxonomy" id="160492"/>
    <lineage>
        <taxon>Bacteria</taxon>
        <taxon>Pseudomonadati</taxon>
        <taxon>Pseudomonadota</taxon>
        <taxon>Gammaproteobacteria</taxon>
        <taxon>Lysobacterales</taxon>
        <taxon>Lysobacteraceae</taxon>
        <taxon>Xylella</taxon>
    </lineage>
</organism>